<organism>
    <name type="scientific">Chlamydia pneumoniae</name>
    <name type="common">Chlamydophila pneumoniae</name>
    <dbReference type="NCBI Taxonomy" id="83558"/>
    <lineage>
        <taxon>Bacteria</taxon>
        <taxon>Pseudomonadati</taxon>
        <taxon>Chlamydiota</taxon>
        <taxon>Chlamydiia</taxon>
        <taxon>Chlamydiales</taxon>
        <taxon>Chlamydiaceae</taxon>
        <taxon>Chlamydia/Chlamydophila group</taxon>
        <taxon>Chlamydia</taxon>
    </lineage>
</organism>
<gene>
    <name evidence="1" type="primary">nqrA</name>
    <name type="synonym">nqr1</name>
    <name type="ordered locus">CPn_0743</name>
    <name type="ordered locus">CP_0002</name>
    <name type="ordered locus">CpB0771</name>
</gene>
<name>NQRA_CHLPN</name>
<sequence length="467" mass="52266">MKITVNRGLDLSLQGSPKESGFYNKIDPEFVSIDLRPFQPLSLKLKVEQGDAVCSGAPIAEYKHFPNTYITSHVSGVVTAIRRGNKRSLLDVIIKKTPGPTSTEYTYDLQTLSRSDLSEIFKENGLFALIKQRPFDIPAIPTQTPRDVFINLADNRPFTPSPEKHLALFSSREEGFYVFVVGVRAIAKLFGLRPHIVFRDRLTLPTQELKTIAHLHTVSGPFPSGSPSIHIHSVAPITNEKEVVFTLSFQDVLTIGHLFLKGRILHEQVTALAGTALKSSLRRYVITTKGASFSSLINLNDISDNDTLISGDPLTGRLCKKEEEPFLGFRDHSISVLHNPTKRELFSFLRIGFNKPTFTKTYLSGFFKKKRTYTNPDTNLHGETRPIIDTDIYDKVMPMRIPVVPLIKAVITKNFDLANELGFLEVCGEDFALPTLIDPSKTEMLTIVKESLIEYAKESGILTPHQD</sequence>
<reference key="1">
    <citation type="journal article" date="1999" name="Nat. Genet.">
        <title>Comparative genomes of Chlamydia pneumoniae and C. trachomatis.</title>
        <authorList>
            <person name="Kalman S."/>
            <person name="Mitchell W.P."/>
            <person name="Marathe R."/>
            <person name="Lammel C.J."/>
            <person name="Fan J."/>
            <person name="Hyman R.W."/>
            <person name="Olinger L."/>
            <person name="Grimwood J."/>
            <person name="Davis R.W."/>
            <person name="Stephens R.S."/>
        </authorList>
    </citation>
    <scope>NUCLEOTIDE SEQUENCE [LARGE SCALE GENOMIC DNA]</scope>
    <source>
        <strain>CWL029</strain>
    </source>
</reference>
<reference key="2">
    <citation type="journal article" date="2000" name="Nucleic Acids Res.">
        <title>Genome sequences of Chlamydia trachomatis MoPn and Chlamydia pneumoniae AR39.</title>
        <authorList>
            <person name="Read T.D."/>
            <person name="Brunham R.C."/>
            <person name="Shen C."/>
            <person name="Gill S.R."/>
            <person name="Heidelberg J.F."/>
            <person name="White O."/>
            <person name="Hickey E.K."/>
            <person name="Peterson J.D."/>
            <person name="Utterback T.R."/>
            <person name="Berry K.J."/>
            <person name="Bass S."/>
            <person name="Linher K.D."/>
            <person name="Weidman J.F."/>
            <person name="Khouri H.M."/>
            <person name="Craven B."/>
            <person name="Bowman C."/>
            <person name="Dodson R.J."/>
            <person name="Gwinn M.L."/>
            <person name="Nelson W.C."/>
            <person name="DeBoy R.T."/>
            <person name="Kolonay J.F."/>
            <person name="McClarty G."/>
            <person name="Salzberg S.L."/>
            <person name="Eisen J.A."/>
            <person name="Fraser C.M."/>
        </authorList>
    </citation>
    <scope>NUCLEOTIDE SEQUENCE [LARGE SCALE GENOMIC DNA]</scope>
    <source>
        <strain>AR39</strain>
    </source>
</reference>
<reference key="3">
    <citation type="journal article" date="2000" name="Nucleic Acids Res.">
        <title>Comparison of whole genome sequences of Chlamydia pneumoniae J138 from Japan and CWL029 from USA.</title>
        <authorList>
            <person name="Shirai M."/>
            <person name="Hirakawa H."/>
            <person name="Kimoto M."/>
            <person name="Tabuchi M."/>
            <person name="Kishi F."/>
            <person name="Ouchi K."/>
            <person name="Shiba T."/>
            <person name="Ishii K."/>
            <person name="Hattori M."/>
            <person name="Kuhara S."/>
            <person name="Nakazawa T."/>
        </authorList>
    </citation>
    <scope>NUCLEOTIDE SEQUENCE [LARGE SCALE GENOMIC DNA]</scope>
    <source>
        <strain>J138</strain>
    </source>
</reference>
<reference key="4">
    <citation type="submission" date="2002-05" db="EMBL/GenBank/DDBJ databases">
        <title>The genome sequence of Chlamydia pneumoniae TW183 and comparison with other Chlamydia strains based on whole genome sequence analysis.</title>
        <authorList>
            <person name="Geng M.M."/>
            <person name="Schuhmacher A."/>
            <person name="Muehldorfer I."/>
            <person name="Bensch K.W."/>
            <person name="Schaefer K.P."/>
            <person name="Schneider S."/>
            <person name="Pohl T."/>
            <person name="Essig A."/>
            <person name="Marre R."/>
            <person name="Melchers K."/>
        </authorList>
    </citation>
    <scope>NUCLEOTIDE SEQUENCE [LARGE SCALE GENOMIC DNA]</scope>
    <source>
        <strain>TW-183</strain>
    </source>
</reference>
<accession>Q9Z7G2</accession>
<keyword id="KW-0406">Ion transport</keyword>
<keyword id="KW-0520">NAD</keyword>
<keyword id="KW-0915">Sodium</keyword>
<keyword id="KW-0739">Sodium transport</keyword>
<keyword id="KW-1278">Translocase</keyword>
<keyword id="KW-0813">Transport</keyword>
<keyword id="KW-0830">Ubiquinone</keyword>
<proteinExistence type="inferred from homology"/>
<dbReference type="EC" id="7.2.1.1" evidence="1"/>
<dbReference type="EMBL" id="AE001363">
    <property type="protein sequence ID" value="AAD18882.1"/>
    <property type="molecule type" value="Genomic_DNA"/>
</dbReference>
<dbReference type="EMBL" id="AE002161">
    <property type="protein sequence ID" value="AAF37899.1"/>
    <property type="molecule type" value="Genomic_DNA"/>
</dbReference>
<dbReference type="EMBL" id="BA000008">
    <property type="protein sequence ID" value="BAA98950.1"/>
    <property type="molecule type" value="Genomic_DNA"/>
</dbReference>
<dbReference type="EMBL" id="AE009440">
    <property type="protein sequence ID" value="AAP98700.1"/>
    <property type="molecule type" value="Genomic_DNA"/>
</dbReference>
<dbReference type="PIR" id="D86583">
    <property type="entry name" value="D86583"/>
</dbReference>
<dbReference type="PIR" id="E72040">
    <property type="entry name" value="E72040"/>
</dbReference>
<dbReference type="RefSeq" id="NP_224939.1">
    <property type="nucleotide sequence ID" value="NC_000922.1"/>
</dbReference>
<dbReference type="RefSeq" id="WP_010883381.1">
    <property type="nucleotide sequence ID" value="NZ_LN847257.1"/>
</dbReference>
<dbReference type="SMR" id="Q9Z7G2"/>
<dbReference type="STRING" id="406984.CPK_ORF00149"/>
<dbReference type="GeneID" id="45050798"/>
<dbReference type="KEGG" id="cpa:CP_0002"/>
<dbReference type="KEGG" id="cpj:nqrA"/>
<dbReference type="KEGG" id="cpn:CPn_0743"/>
<dbReference type="KEGG" id="cpt:CpB0771"/>
<dbReference type="PATRIC" id="fig|115713.3.peg.819"/>
<dbReference type="eggNOG" id="COG1726">
    <property type="taxonomic scope" value="Bacteria"/>
</dbReference>
<dbReference type="HOGENOM" id="CLU_046656_0_0_0"/>
<dbReference type="OMA" id="VGMKPTM"/>
<dbReference type="OrthoDB" id="9774536at2"/>
<dbReference type="Proteomes" id="UP000000583">
    <property type="component" value="Chromosome"/>
</dbReference>
<dbReference type="Proteomes" id="UP000000801">
    <property type="component" value="Chromosome"/>
</dbReference>
<dbReference type="GO" id="GO:0016655">
    <property type="term" value="F:oxidoreductase activity, acting on NAD(P)H, quinone or similar compound as acceptor"/>
    <property type="evidence" value="ECO:0007669"/>
    <property type="project" value="UniProtKB-UniRule"/>
</dbReference>
<dbReference type="GO" id="GO:0006814">
    <property type="term" value="P:sodium ion transport"/>
    <property type="evidence" value="ECO:0007669"/>
    <property type="project" value="UniProtKB-UniRule"/>
</dbReference>
<dbReference type="HAMAP" id="MF_00425">
    <property type="entry name" value="NqrA"/>
    <property type="match status" value="1"/>
</dbReference>
<dbReference type="InterPro" id="IPR008703">
    <property type="entry name" value="NqrA"/>
</dbReference>
<dbReference type="InterPro" id="IPR056148">
    <property type="entry name" value="NQRA_2nd"/>
</dbReference>
<dbReference type="InterPro" id="IPR022615">
    <property type="entry name" value="NqrA_C_domain"/>
</dbReference>
<dbReference type="InterPro" id="IPR056147">
    <property type="entry name" value="NQRA_N"/>
</dbReference>
<dbReference type="NCBIfam" id="TIGR01936">
    <property type="entry name" value="nqrA"/>
    <property type="match status" value="1"/>
</dbReference>
<dbReference type="NCBIfam" id="NF003758">
    <property type="entry name" value="PRK05352.1-1"/>
    <property type="match status" value="1"/>
</dbReference>
<dbReference type="PANTHER" id="PTHR37839">
    <property type="entry name" value="NA(+)-TRANSLOCATING NADH-QUINONE REDUCTASE SUBUNIT A"/>
    <property type="match status" value="1"/>
</dbReference>
<dbReference type="PANTHER" id="PTHR37839:SF1">
    <property type="entry name" value="NA(+)-TRANSLOCATING NADH-QUINONE REDUCTASE SUBUNIT A"/>
    <property type="match status" value="1"/>
</dbReference>
<dbReference type="Pfam" id="PF24836">
    <property type="entry name" value="NQRA_2nd"/>
    <property type="match status" value="1"/>
</dbReference>
<dbReference type="Pfam" id="PF05896">
    <property type="entry name" value="NQRA_N"/>
    <property type="match status" value="1"/>
</dbReference>
<dbReference type="Pfam" id="PF11973">
    <property type="entry name" value="NQRA_SLBB"/>
    <property type="match status" value="1"/>
</dbReference>
<feature type="chain" id="PRO_0000214195" description="Na(+)-translocating NADH-quinone reductase subunit A">
    <location>
        <begin position="1"/>
        <end position="467"/>
    </location>
</feature>
<comment type="function">
    <text evidence="1">NQR complex catalyzes the reduction of ubiquinone-1 to ubiquinol by two successive reactions, coupled with the transport of Na(+) ions from the cytoplasm to the periplasm. NqrA to NqrE are probably involved in the second step, the conversion of ubisemiquinone to ubiquinol.</text>
</comment>
<comment type="catalytic activity">
    <reaction evidence="1">
        <text>a ubiquinone + n Na(+)(in) + NADH + H(+) = a ubiquinol + n Na(+)(out) + NAD(+)</text>
        <dbReference type="Rhea" id="RHEA:47748"/>
        <dbReference type="Rhea" id="RHEA-COMP:9565"/>
        <dbReference type="Rhea" id="RHEA-COMP:9566"/>
        <dbReference type="ChEBI" id="CHEBI:15378"/>
        <dbReference type="ChEBI" id="CHEBI:16389"/>
        <dbReference type="ChEBI" id="CHEBI:17976"/>
        <dbReference type="ChEBI" id="CHEBI:29101"/>
        <dbReference type="ChEBI" id="CHEBI:57540"/>
        <dbReference type="ChEBI" id="CHEBI:57945"/>
        <dbReference type="EC" id="7.2.1.1"/>
    </reaction>
</comment>
<comment type="subunit">
    <text evidence="1">Composed of six subunits; NqrA, NqrB, NqrC, NqrD, NqrE and NqrF.</text>
</comment>
<comment type="similarity">
    <text evidence="1">Belongs to the NqrA family.</text>
</comment>
<evidence type="ECO:0000255" key="1">
    <source>
        <dbReference type="HAMAP-Rule" id="MF_00425"/>
    </source>
</evidence>
<protein>
    <recommendedName>
        <fullName evidence="1">Na(+)-translocating NADH-quinone reductase subunit A</fullName>
        <shortName evidence="1">Na(+)-NQR subunit A</shortName>
        <shortName evidence="1">Na(+)-translocating NQR subunit A</shortName>
        <ecNumber evidence="1">7.2.1.1</ecNumber>
    </recommendedName>
    <alternativeName>
        <fullName evidence="1">NQR complex subunit A</fullName>
    </alternativeName>
    <alternativeName>
        <fullName evidence="1">NQR-1 subunit A</fullName>
    </alternativeName>
</protein>